<evidence type="ECO:0000250" key="1">
    <source>
        <dbReference type="UniProtKB" id="Q8R4D1"/>
    </source>
</evidence>
<evidence type="ECO:0000250" key="2">
    <source>
        <dbReference type="UniProtKB" id="Q9Y2E8"/>
    </source>
</evidence>
<evidence type="ECO:0000255" key="3"/>
<evidence type="ECO:0000269" key="4">
    <source>
    </source>
</evidence>
<evidence type="ECO:0000269" key="5">
    <source>
    </source>
</evidence>
<evidence type="ECO:0000269" key="6">
    <source>
    </source>
</evidence>
<evidence type="ECO:0000269" key="7">
    <source>
    </source>
</evidence>
<evidence type="ECO:0000269" key="8">
    <source>
    </source>
</evidence>
<evidence type="ECO:0000269" key="9">
    <source>
    </source>
</evidence>
<evidence type="ECO:0000305" key="10"/>
<keyword id="KW-0050">Antiport</keyword>
<keyword id="KW-1003">Cell membrane</keyword>
<keyword id="KW-0968">Cytoplasmic vesicle</keyword>
<keyword id="KW-0221">Differentiation</keyword>
<keyword id="KW-0967">Endosome</keyword>
<keyword id="KW-0333">Golgi apparatus</keyword>
<keyword id="KW-0406">Ion transport</keyword>
<keyword id="KW-0472">Membrane</keyword>
<keyword id="KW-0597">Phosphoprotein</keyword>
<keyword id="KW-1185">Reference proteome</keyword>
<keyword id="KW-0915">Sodium</keyword>
<keyword id="KW-0739">Sodium transport</keyword>
<keyword id="KW-0744">Spermatogenesis</keyword>
<keyword id="KW-0812">Transmembrane</keyword>
<keyword id="KW-1133">Transmembrane helix</keyword>
<keyword id="KW-0813">Transport</keyword>
<comment type="function">
    <text evidence="1 2 7 8 9">Na(+)/H(+) antiporter. Mediates the electoneutral exchange of intracellular H(+) ions for extracellular Na(+) in 1:1 stoichiometry. Acts as an Na(+)/H(+) exchanger in the trans-Golgi. Contributes to the regulation of pH regulation of Golgi apparatus, and consequently, in protein trafficking and endosomal morphology (By similarity). In germ cells, plays a crucial role in acrosome biogenesis and sperm development, probably by playing a role in the fusion of the Golgi-derived vesicles that form the acrosomal cap (By similarity). Can also be active at the cell surface of specialized cells (PubMed:22088432). In the small intestine, at the cell membrane, plays a major physiological role in transepithelial absorption of Na(+) and regulates intracellular pH homeostasis of intestinal epithelial cells (PubMed:18209477, PubMed:34288721). Acts as an important regulator of mucosal integrity in the intestine and in the stomach, could mediate the pH fluctuation necessary for mucin exocytosis or assist membrane trafficking of other proteins. Plays a role in photoreceptor survival and in the maintenance of intracellular pH homeostasis in retinal pigment epithelium (RPE cells) (By similarity).</text>
</comment>
<comment type="catalytic activity">
    <reaction evidence="7 8">
        <text>Na(+)(in) + H(+)(out) = Na(+)(out) + H(+)(in)</text>
        <dbReference type="Rhea" id="RHEA:29419"/>
        <dbReference type="ChEBI" id="CHEBI:15378"/>
        <dbReference type="ChEBI" id="CHEBI:29101"/>
    </reaction>
</comment>
<comment type="activity regulation">
    <text evidence="7 8">Expression and activity are regulated by acid media by increasing the rate of trafficking to the apical membrane (PubMed:22088432). Inhibited by HOE694 and S3226 (PubMed:18209477).</text>
</comment>
<comment type="biophysicochemical properties">
    <kinetics>
        <KM evidence="7">0.32 mM for H(+)(for intracellular H(+))</KM>
        <KM evidence="7">23 mM for Na(+) (for extracellular Na(+))</KM>
    </kinetics>
</comment>
<comment type="subcellular location">
    <subcellularLocation>
        <location evidence="2">Golgi apparatus membrane</location>
        <topology evidence="3">Multi-pass membrane protein</topology>
    </subcellularLocation>
    <subcellularLocation>
        <location evidence="2">Golgi apparatus</location>
        <location evidence="2">trans-Golgi network membrane</location>
        <topology evidence="3">Multi-pass membrane protein</topology>
    </subcellularLocation>
    <subcellularLocation>
        <location evidence="2">Endosome</location>
        <location evidence="2">Multivesicular body membrane</location>
        <topology evidence="3">Multi-pass membrane protein</topology>
    </subcellularLocation>
    <subcellularLocation>
        <location evidence="4 5 6 8 9">Apical cell membrane</location>
        <topology evidence="3">Multi-pass membrane protein</topology>
    </subcellularLocation>
    <subcellularLocation>
        <location evidence="1">Cytoplasmic vesicle</location>
        <location evidence="1">Secretory vesicle</location>
        <location evidence="1">Acrosome</location>
    </subcellularLocation>
    <text evidence="2 5 8">Intracellular versus plasma membrane-resident location may vary with cell type. Mainly localized to the mid- to trans-Golgi compartments but a proportion is also localized to multivesicular bodies (By similarity). Expressed in the apical membrane of the epithelial cells in the small intestine, along the crypt villus axis (PubMed:22088432). Recruitment to the plasma membrane upon acid stimulation (PubMed:22088432). In the kidney localizes to the apical membrane and coated pit regions (PubMed:15522984).</text>
</comment>
<comment type="tissue specificity">
    <text evidence="4 6 7">Intestine and kidneys.</text>
</comment>
<comment type="developmental stage">
    <text evidence="6">Expression is higher in 2 and 3 week old rats and lower in adults.</text>
</comment>
<comment type="similarity">
    <text evidence="10">Belongs to the monovalent cation:proton antiporter 1 (CPA1) transporter (TC 2.A.36) family.</text>
</comment>
<protein>
    <recommendedName>
        <fullName>Sodium/hydrogen exchanger 8</fullName>
    </recommendedName>
    <alternativeName>
        <fullName>Na(+)/H(+) exchanger 8</fullName>
        <shortName>NHE-8</shortName>
    </alternativeName>
    <alternativeName>
        <fullName>Solute carrier family 9 member 8</fullName>
    </alternativeName>
</protein>
<gene>
    <name type="primary">Slc9a8</name>
    <name type="synonym">Nhe8</name>
</gene>
<accession>Q4L208</accession>
<proteinExistence type="evidence at protein level"/>
<sequence length="575" mass="64609">MAEEFSNTTHESFNFTLHTTLGVTTKLVLPTPAEPILPVQTGEQAQQEEQSSGMTIFFSLLVLAICIILVHLLIRYRLHFLPESVAVVSLGILMGAVIKVIEFKKLANWKEEEMFRPNMFFLLLLPPIIFESGYSLHKGNFFQNIGSITLFAVFGTAISAFVVGGGIYFLGQADVISKLNMTDSFAFGSLISAVDPVATIAIFNALHVDPVLNMLVFGESILNDAVSIVLTNTAEGLTRKHMSDVSGWQTFSQALGYFLKMFFGSAALGTLTGLISALVLKHIDLRKTPSLEFGMMIIFAYLPYGLAEGISLSGIMAILFSGIVMSHYTHHNLSPVTQILMQQTLRTVAFLCETCVFAFLGLSIFSFPHKFEISFVIWCIVLVLFGRAVNIFPLSYLLNFFRDHKITPKMMFIMWFSGLRGAIPYALSLHLGLEPMEKRQLIGTTTIIIVLFTILLLGGSTMPLIRLVDIEDARARRRSKKDVNLSKTEKMGNAIESEHLSELTEEEYEAHYIRQQDLKGFMWLDAKYLNPFFTRRLTQEDLHHGRIQMKSLTNKWYEEVRQGPSGSEDDEQELF</sequence>
<reference key="1">
    <citation type="journal article" date="2005" name="Am. J. Physiol.">
        <title>Subcloning, localization, and expression of the rat intestinal sodium-hydrogen exchanger isoform 8.</title>
        <authorList>
            <person name="Xu H."/>
            <person name="Chen R."/>
            <person name="Ghishan F.K."/>
        </authorList>
    </citation>
    <scope>NUCLEOTIDE SEQUENCE [MRNA]</scope>
    <scope>TISSUE SPECIFICITY</scope>
    <scope>DEVELOPMENTAL STAGE</scope>
    <scope>SUBCELLULAR LOCATION</scope>
</reference>
<reference key="2">
    <citation type="journal article" date="2003" name="Am. J. Physiol.">
        <title>Renal expression of novel Na+/H+ exchanger isoform NHE8.</title>
        <authorList>
            <person name="Goyal S."/>
            <person name="Vanden Heuvel G."/>
            <person name="Aronson P.S."/>
        </authorList>
    </citation>
    <scope>TISSUE SPECIFICITY</scope>
    <scope>SUBCELLULAR LOCATION</scope>
</reference>
<reference key="3">
    <citation type="journal article" date="2005" name="Am. J. Physiol.">
        <title>Immunolocalization of NHE8 in rat kidney.</title>
        <authorList>
            <person name="Goyal S."/>
            <person name="Mentone S."/>
            <person name="Aronson P.S."/>
        </authorList>
    </citation>
    <scope>SUBCELLULAR LOCATION</scope>
</reference>
<reference key="4">
    <citation type="journal article" date="2008" name="Cell. Physiol. Biochem.">
        <title>Gastrointestinal distribution and kinetic characterization of the sodium-hydrogen exchanger isoform 8 (NHE8).</title>
        <authorList>
            <person name="Xu H."/>
            <person name="Chen H."/>
            <person name="Dong J."/>
            <person name="Lynch R."/>
            <person name="Ghishan F.K."/>
        </authorList>
    </citation>
    <scope>TISSUE SPECIFICITY</scope>
    <scope>FUNCTION</scope>
    <scope>TRANSPORTER ACTIVITY</scope>
    <scope>BIOPHYSICOCHEMICAL PROPERTIES</scope>
    <scope>ACTIVITY REGULATION</scope>
</reference>
<reference key="5">
    <citation type="journal article" date="2012" name="Am. J. Physiol.">
        <title>Acid increases NHE8 surface expression and activity in NRK cells.</title>
        <authorList>
            <person name="Joseph C."/>
            <person name="Twombley K."/>
            <person name="Gattineni J."/>
            <person name="Zhang Q."/>
            <person name="Dwarakanath V."/>
            <person name="Baum M."/>
        </authorList>
    </citation>
    <scope>SUBCELLULAR LOCATION</scope>
    <scope>FUNCTION</scope>
    <scope>TRANSPORTER ACTIVITY</scope>
    <scope>ACTIVITY REGULATION</scope>
</reference>
<reference key="6">
    <citation type="journal article" date="2021" name="Am. J. Physiol.">
        <title>Functional characterization of the sodium/hydrogen exchanger 8 and its role in proliferation of colonic epithelial cells.</title>
        <authorList>
            <person name="Zhou K."/>
            <person name="Amiri M."/>
            <person name="Salari A."/>
            <person name="Yu Y."/>
            <person name="Xu H."/>
            <person name="Seidler U."/>
            <person name="Nikolovska K."/>
        </authorList>
    </citation>
    <scope>FUNCTION</scope>
    <scope>SUBCELLULAR LOCATION</scope>
</reference>
<feature type="chain" id="PRO_0000379803" description="Sodium/hydrogen exchanger 8">
    <location>
        <begin position="1"/>
        <end position="575"/>
    </location>
</feature>
<feature type="transmembrane region" description="Helical" evidence="3">
    <location>
        <begin position="54"/>
        <end position="74"/>
    </location>
</feature>
<feature type="transmembrane region" description="Helical" evidence="3">
    <location>
        <begin position="78"/>
        <end position="98"/>
    </location>
</feature>
<feature type="transmembrane region" description="Helical" evidence="3">
    <location>
        <begin position="117"/>
        <end position="137"/>
    </location>
</feature>
<feature type="transmembrane region" description="Helical" evidence="3">
    <location>
        <begin position="150"/>
        <end position="170"/>
    </location>
</feature>
<feature type="transmembrane region" description="Helical" evidence="3">
    <location>
        <begin position="185"/>
        <end position="205"/>
    </location>
</feature>
<feature type="transmembrane region" description="Helical" evidence="3">
    <location>
        <begin position="255"/>
        <end position="275"/>
    </location>
</feature>
<feature type="transmembrane region" description="Helical" evidence="3">
    <location>
        <begin position="305"/>
        <end position="325"/>
    </location>
</feature>
<feature type="transmembrane region" description="Helical" evidence="3">
    <location>
        <begin position="348"/>
        <end position="368"/>
    </location>
</feature>
<feature type="transmembrane region" description="Helical" evidence="3">
    <location>
        <begin position="373"/>
        <end position="393"/>
    </location>
</feature>
<feature type="transmembrane region" description="Helical" evidence="3">
    <location>
        <begin position="411"/>
        <end position="431"/>
    </location>
</feature>
<feature type="transmembrane region" description="Helical" evidence="3">
    <location>
        <begin position="445"/>
        <end position="465"/>
    </location>
</feature>
<feature type="modified residue" description="Phosphothreonine" evidence="1">
    <location>
        <position position="504"/>
    </location>
</feature>
<feature type="modified residue" description="Phosphoserine" evidence="2">
    <location>
        <position position="565"/>
    </location>
</feature>
<feature type="modified residue" description="Phosphoserine" evidence="2">
    <location>
        <position position="567"/>
    </location>
</feature>
<dbReference type="EMBL" id="AY496958">
    <property type="protein sequence ID" value="AAS75864.1"/>
    <property type="molecule type" value="mRNA"/>
</dbReference>
<dbReference type="RefSeq" id="NP_001020452.1">
    <property type="nucleotide sequence ID" value="NM_001025281.1"/>
</dbReference>
<dbReference type="SMR" id="Q4L208"/>
<dbReference type="FunCoup" id="Q4L208">
    <property type="interactions" value="997"/>
</dbReference>
<dbReference type="STRING" id="10116.ENSRNOP00000012175"/>
<dbReference type="GlyGen" id="Q4L208">
    <property type="glycosylation" value="1 site"/>
</dbReference>
<dbReference type="iPTMnet" id="Q4L208"/>
<dbReference type="PhosphoSitePlus" id="Q4L208"/>
<dbReference type="PaxDb" id="10116-ENSRNOP00000012175"/>
<dbReference type="GeneID" id="311651"/>
<dbReference type="KEGG" id="rno:311651"/>
<dbReference type="AGR" id="RGD:1308193"/>
<dbReference type="CTD" id="23315"/>
<dbReference type="RGD" id="1308193">
    <property type="gene designation" value="Slc9a8"/>
</dbReference>
<dbReference type="eggNOG" id="KOG1965">
    <property type="taxonomic scope" value="Eukaryota"/>
</dbReference>
<dbReference type="InParanoid" id="Q4L208"/>
<dbReference type="OrthoDB" id="196264at2759"/>
<dbReference type="PhylomeDB" id="Q4L208"/>
<dbReference type="Reactome" id="R-RNO-425986">
    <property type="pathway name" value="Sodium/Proton exchangers"/>
</dbReference>
<dbReference type="PRO" id="PR:Q4L208"/>
<dbReference type="Proteomes" id="UP000002494">
    <property type="component" value="Unplaced"/>
</dbReference>
<dbReference type="GO" id="GO:0001669">
    <property type="term" value="C:acrosomal vesicle"/>
    <property type="evidence" value="ECO:0000250"/>
    <property type="project" value="UniProtKB"/>
</dbReference>
<dbReference type="GO" id="GO:0016324">
    <property type="term" value="C:apical plasma membrane"/>
    <property type="evidence" value="ECO:0000314"/>
    <property type="project" value="UniProtKB"/>
</dbReference>
<dbReference type="GO" id="GO:0000139">
    <property type="term" value="C:Golgi membrane"/>
    <property type="evidence" value="ECO:0000250"/>
    <property type="project" value="UniProtKB"/>
</dbReference>
<dbReference type="GO" id="GO:0032585">
    <property type="term" value="C:multivesicular body membrane"/>
    <property type="evidence" value="ECO:0000250"/>
    <property type="project" value="UniProtKB"/>
</dbReference>
<dbReference type="GO" id="GO:0032588">
    <property type="term" value="C:trans-Golgi network membrane"/>
    <property type="evidence" value="ECO:0000250"/>
    <property type="project" value="UniProtKB"/>
</dbReference>
<dbReference type="GO" id="GO:0015386">
    <property type="term" value="F:potassium:proton antiporter activity"/>
    <property type="evidence" value="ECO:0000266"/>
    <property type="project" value="RGD"/>
</dbReference>
<dbReference type="GO" id="GO:0015385">
    <property type="term" value="F:sodium:proton antiporter activity"/>
    <property type="evidence" value="ECO:0000314"/>
    <property type="project" value="UniProtKB"/>
</dbReference>
<dbReference type="GO" id="GO:0001675">
    <property type="term" value="P:acrosome assembly"/>
    <property type="evidence" value="ECO:0000250"/>
    <property type="project" value="UniProtKB"/>
</dbReference>
<dbReference type="GO" id="GO:0071805">
    <property type="term" value="P:potassium ion transmembrane transport"/>
    <property type="evidence" value="ECO:0000318"/>
    <property type="project" value="GO_Central"/>
</dbReference>
<dbReference type="GO" id="GO:1902600">
    <property type="term" value="P:proton transmembrane transport"/>
    <property type="evidence" value="ECO:0000314"/>
    <property type="project" value="UniProtKB"/>
</dbReference>
<dbReference type="GO" id="GO:1905526">
    <property type="term" value="P:regulation of Golgi lumen acidification"/>
    <property type="evidence" value="ECO:0000266"/>
    <property type="project" value="RGD"/>
</dbReference>
<dbReference type="GO" id="GO:0051453">
    <property type="term" value="P:regulation of intracellular pH"/>
    <property type="evidence" value="ECO:0000314"/>
    <property type="project" value="UniProtKB"/>
</dbReference>
<dbReference type="GO" id="GO:0035725">
    <property type="term" value="P:sodium ion transmembrane transport"/>
    <property type="evidence" value="ECO:0000314"/>
    <property type="project" value="UniProtKB"/>
</dbReference>
<dbReference type="Gene3D" id="6.10.140.1330">
    <property type="match status" value="1"/>
</dbReference>
<dbReference type="InterPro" id="IPR018422">
    <property type="entry name" value="Cation/H_exchanger_CPA1"/>
</dbReference>
<dbReference type="InterPro" id="IPR006153">
    <property type="entry name" value="Cation/H_exchanger_TM"/>
</dbReference>
<dbReference type="InterPro" id="IPR004709">
    <property type="entry name" value="NaH_exchanger"/>
</dbReference>
<dbReference type="NCBIfam" id="TIGR00840">
    <property type="entry name" value="b_cpa1"/>
    <property type="match status" value="1"/>
</dbReference>
<dbReference type="PANTHER" id="PTHR10110">
    <property type="entry name" value="SODIUM/HYDROGEN EXCHANGER"/>
    <property type="match status" value="1"/>
</dbReference>
<dbReference type="PANTHER" id="PTHR10110:SF191">
    <property type="entry name" value="SODIUM_HYDROGEN EXCHANGER 8"/>
    <property type="match status" value="1"/>
</dbReference>
<dbReference type="Pfam" id="PF00999">
    <property type="entry name" value="Na_H_Exchanger"/>
    <property type="match status" value="1"/>
</dbReference>
<dbReference type="PRINTS" id="PR01084">
    <property type="entry name" value="NAHEXCHNGR"/>
</dbReference>
<name>SL9A8_RAT</name>
<organism>
    <name type="scientific">Rattus norvegicus</name>
    <name type="common">Rat</name>
    <dbReference type="NCBI Taxonomy" id="10116"/>
    <lineage>
        <taxon>Eukaryota</taxon>
        <taxon>Metazoa</taxon>
        <taxon>Chordata</taxon>
        <taxon>Craniata</taxon>
        <taxon>Vertebrata</taxon>
        <taxon>Euteleostomi</taxon>
        <taxon>Mammalia</taxon>
        <taxon>Eutheria</taxon>
        <taxon>Euarchontoglires</taxon>
        <taxon>Glires</taxon>
        <taxon>Rodentia</taxon>
        <taxon>Myomorpha</taxon>
        <taxon>Muroidea</taxon>
        <taxon>Muridae</taxon>
        <taxon>Murinae</taxon>
        <taxon>Rattus</taxon>
    </lineage>
</organism>